<dbReference type="EMBL" id="U11053">
    <property type="protein sequence ID" value="AAA20985.1"/>
    <property type="molecule type" value="mRNA"/>
</dbReference>
<dbReference type="EMBL" id="U17298">
    <property type="protein sequence ID" value="AAC50158.1"/>
    <property type="molecule type" value="mRNA"/>
</dbReference>
<dbReference type="EMBL" id="L37362">
    <property type="protein sequence ID" value="AAA63906.1"/>
    <property type="molecule type" value="mRNA"/>
</dbReference>
<dbReference type="EMBL" id="AF498922">
    <property type="protein sequence ID" value="AAM21070.1"/>
    <property type="molecule type" value="mRNA"/>
</dbReference>
<dbReference type="EMBL" id="AK310233">
    <property type="status" value="NOT_ANNOTATED_CDS"/>
    <property type="molecule type" value="mRNA"/>
</dbReference>
<dbReference type="EMBL" id="AC009646">
    <property type="status" value="NOT_ANNOTATED_CDS"/>
    <property type="molecule type" value="Genomic_DNA"/>
</dbReference>
<dbReference type="EMBL" id="BC099912">
    <property type="protein sequence ID" value="AAH99912.1"/>
    <property type="molecule type" value="mRNA"/>
</dbReference>
<dbReference type="EMBL" id="L36130">
    <property type="protein sequence ID" value="AAA63646.1"/>
    <property type="molecule type" value="mRNA"/>
</dbReference>
<dbReference type="EMBL" id="U16860">
    <property type="protein sequence ID" value="AAA56758.1"/>
    <property type="molecule type" value="Genomic_DNA"/>
</dbReference>
<dbReference type="CCDS" id="CCDS6152.1">
    <molecule id="P41145-1"/>
</dbReference>
<dbReference type="CCDS" id="CCDS64895.1">
    <molecule id="P41145-2"/>
</dbReference>
<dbReference type="PIR" id="JC2338">
    <property type="entry name" value="JC2338"/>
</dbReference>
<dbReference type="RefSeq" id="NP_000903.2">
    <molecule id="P41145-1"/>
    <property type="nucleotide sequence ID" value="NM_000912.4"/>
</dbReference>
<dbReference type="RefSeq" id="NP_001269833.1">
    <molecule id="P41145-2"/>
    <property type="nucleotide sequence ID" value="NM_001282904.2"/>
</dbReference>
<dbReference type="RefSeq" id="NP_001305426.1">
    <property type="nucleotide sequence ID" value="NM_001318497.1"/>
</dbReference>
<dbReference type="PDB" id="4DJH">
    <property type="method" value="X-ray"/>
    <property type="resolution" value="2.90 A"/>
    <property type="chains" value="A/B=43-358"/>
</dbReference>
<dbReference type="PDB" id="6B73">
    <property type="method" value="X-ray"/>
    <property type="resolution" value="3.10 A"/>
    <property type="chains" value="A/B=54-358"/>
</dbReference>
<dbReference type="PDB" id="6VI4">
    <property type="method" value="X-ray"/>
    <property type="resolution" value="3.30 A"/>
    <property type="chains" value="A/B=54-358"/>
</dbReference>
<dbReference type="PDB" id="7T10">
    <property type="method" value="EM"/>
    <property type="resolution" value="2.50 A"/>
    <property type="chains" value="R=256-270"/>
</dbReference>
<dbReference type="PDB" id="7T11">
    <property type="method" value="EM"/>
    <property type="resolution" value="2.70 A"/>
    <property type="chains" value="R=256-270"/>
</dbReference>
<dbReference type="PDB" id="7UL2">
    <property type="method" value="EM"/>
    <property type="resolution" value="2.40 A"/>
    <property type="chains" value="R=246-277"/>
</dbReference>
<dbReference type="PDB" id="7UL3">
    <property type="method" value="EM"/>
    <property type="resolution" value="3.00 A"/>
    <property type="chains" value="A=246-284"/>
</dbReference>
<dbReference type="PDB" id="7UL5">
    <property type="method" value="EM"/>
    <property type="resolution" value="3.10 A"/>
    <property type="chains" value="A=256-271"/>
</dbReference>
<dbReference type="PDB" id="7Y1F">
    <property type="method" value="EM"/>
    <property type="resolution" value="3.30 A"/>
    <property type="chains" value="R=54-358"/>
</dbReference>
<dbReference type="PDB" id="7YIT">
    <property type="method" value="X-ray"/>
    <property type="resolution" value="3.30 A"/>
    <property type="chains" value="A=54-358"/>
</dbReference>
<dbReference type="PDB" id="7YMJ">
    <property type="method" value="EM"/>
    <property type="resolution" value="3.35 A"/>
    <property type="chains" value="A=249-277"/>
</dbReference>
<dbReference type="PDB" id="8DZP">
    <property type="method" value="EM"/>
    <property type="resolution" value="2.71 A"/>
    <property type="chains" value="A=54-358"/>
</dbReference>
<dbReference type="PDB" id="8DZQ">
    <property type="method" value="EM"/>
    <property type="resolution" value="2.82 A"/>
    <property type="chains" value="A=54-358"/>
</dbReference>
<dbReference type="PDB" id="8DZR">
    <property type="method" value="EM"/>
    <property type="resolution" value="2.61 A"/>
    <property type="chains" value="A=54-338"/>
</dbReference>
<dbReference type="PDB" id="8DZS">
    <property type="method" value="EM"/>
    <property type="resolution" value="2.65 A"/>
    <property type="chains" value="A=54-358"/>
</dbReference>
<dbReference type="PDB" id="8F7W">
    <property type="method" value="EM"/>
    <property type="resolution" value="3.19 A"/>
    <property type="chains" value="R=3-380"/>
</dbReference>
<dbReference type="PDB" id="8FEG">
    <property type="method" value="EM"/>
    <property type="resolution" value="2.54 A"/>
    <property type="chains" value="B=54-358"/>
</dbReference>
<dbReference type="PDB" id="8HNN">
    <property type="method" value="EM"/>
    <property type="resolution" value="3.60 A"/>
    <property type="chains" value="R=252-276"/>
</dbReference>
<dbReference type="PDB" id="8K2W">
    <property type="method" value="EM"/>
    <property type="resolution" value="3.00 A"/>
    <property type="chains" value="R=252-276"/>
</dbReference>
<dbReference type="PDB" id="8VVE">
    <property type="method" value="EM"/>
    <property type="resolution" value="3.30 A"/>
    <property type="chains" value="A=1-380"/>
</dbReference>
<dbReference type="PDB" id="8VVF">
    <property type="method" value="EM"/>
    <property type="resolution" value="3.00 A"/>
    <property type="chains" value="A=1-380"/>
</dbReference>
<dbReference type="PDB" id="8VVG">
    <property type="method" value="EM"/>
    <property type="resolution" value="3.30 A"/>
    <property type="chains" value="A=1-380"/>
</dbReference>
<dbReference type="PDB" id="9D61">
    <property type="method" value="EM"/>
    <property type="resolution" value="3.58 A"/>
    <property type="chains" value="A=1-380"/>
</dbReference>
<dbReference type="PDBsum" id="4DJH"/>
<dbReference type="PDBsum" id="6B73"/>
<dbReference type="PDBsum" id="6VI4"/>
<dbReference type="PDBsum" id="7T10"/>
<dbReference type="PDBsum" id="7T11"/>
<dbReference type="PDBsum" id="7UL2"/>
<dbReference type="PDBsum" id="7UL3"/>
<dbReference type="PDBsum" id="7UL5"/>
<dbReference type="PDBsum" id="7Y1F"/>
<dbReference type="PDBsum" id="7YIT"/>
<dbReference type="PDBsum" id="7YMJ"/>
<dbReference type="PDBsum" id="8DZP"/>
<dbReference type="PDBsum" id="8DZQ"/>
<dbReference type="PDBsum" id="8DZR"/>
<dbReference type="PDBsum" id="8DZS"/>
<dbReference type="PDBsum" id="8F7W"/>
<dbReference type="PDBsum" id="8FEG"/>
<dbReference type="PDBsum" id="8HNN"/>
<dbReference type="PDBsum" id="8K2W"/>
<dbReference type="PDBsum" id="8VVE"/>
<dbReference type="PDBsum" id="8VVF"/>
<dbReference type="PDBsum" id="8VVG"/>
<dbReference type="PDBsum" id="9D61"/>
<dbReference type="EMDB" id="EMD-25587"/>
<dbReference type="EMDB" id="EMD-27804"/>
<dbReference type="EMDB" id="EMD-27805"/>
<dbReference type="EMDB" id="EMD-27806"/>
<dbReference type="EMDB" id="EMD-27807"/>
<dbReference type="EMDB" id="EMD-28911"/>
<dbReference type="EMDB" id="EMD-29026"/>
<dbReference type="EMDB" id="EMD-33562"/>
<dbReference type="EMDB" id="EMD-41876"/>
<dbReference type="EMDB" id="EMD-43556"/>
<dbReference type="EMDB" id="EMD-43557"/>
<dbReference type="EMDB" id="EMD-43558"/>
<dbReference type="EMDB" id="EMD-43648"/>
<dbReference type="EMDB" id="EMD-43732"/>
<dbReference type="EMDB" id="EMD-46585"/>
<dbReference type="SMR" id="P41145"/>
<dbReference type="BioGRID" id="111031">
    <property type="interactions" value="11"/>
</dbReference>
<dbReference type="CORUM" id="P41145"/>
<dbReference type="FunCoup" id="P41145">
    <property type="interactions" value="720"/>
</dbReference>
<dbReference type="IntAct" id="P41145">
    <property type="interactions" value="12"/>
</dbReference>
<dbReference type="MINT" id="P41145"/>
<dbReference type="BindingDB" id="P41145"/>
<dbReference type="ChEMBL" id="CHEMBL237"/>
<dbReference type="DrugBank" id="DB01571">
    <property type="generic name" value="3-Methylfentanyl"/>
</dbReference>
<dbReference type="DrugBank" id="DB01439">
    <property type="generic name" value="3-Methylthiofentanyl"/>
</dbReference>
<dbReference type="DrugBank" id="DB05443">
    <property type="generic name" value="ADL 10-0101"/>
</dbReference>
<dbReference type="DrugBank" id="DB06274">
    <property type="generic name" value="Alvimopan"/>
</dbReference>
<dbReference type="DrugBank" id="DB06288">
    <property type="generic name" value="Amisulpride"/>
</dbReference>
<dbReference type="DrugBank" id="DB00321">
    <property type="generic name" value="Amitriptyline"/>
</dbReference>
<dbReference type="DrugBank" id="DB01238">
    <property type="generic name" value="Aripiprazole"/>
</dbReference>
<dbReference type="DrugBank" id="DB05104">
    <property type="generic name" value="Asimadoline"/>
</dbReference>
<dbReference type="DrugBank" id="DB12341">
    <property type="generic name" value="Aticaprant"/>
</dbReference>
<dbReference type="DrugBank" id="DB00289">
    <property type="generic name" value="Atomoxetine"/>
</dbReference>
<dbReference type="DrugBank" id="DB16068">
    <property type="generic name" value="BTRX-335140"/>
</dbReference>
<dbReference type="DrugBank" id="DB00921">
    <property type="generic name" value="Buprenorphine"/>
</dbReference>
<dbReference type="DrugBank" id="DB00611">
    <property type="generic name" value="Butorphanol"/>
</dbReference>
<dbReference type="DrugBank" id="DB09173">
    <property type="generic name" value="Butyrfentanyl"/>
</dbReference>
<dbReference type="DrugBank" id="DB01535">
    <property type="generic name" value="Carfentanil"/>
</dbReference>
<dbReference type="DrugBank" id="DB01243">
    <property type="generic name" value="Chloroxine"/>
</dbReference>
<dbReference type="DrugBank" id="DB04815">
    <property type="generic name" value="Clioquinol"/>
</dbReference>
<dbReference type="DrugBank" id="DB00318">
    <property type="generic name" value="Codeine"/>
</dbReference>
<dbReference type="DrugBank" id="DB05155">
    <property type="generic name" value="CR665"/>
</dbReference>
<dbReference type="DrugBank" id="DB00514">
    <property type="generic name" value="Dextromethorphan"/>
</dbReference>
<dbReference type="DrugBank" id="DB00647">
    <property type="generic name" value="Dextropropoxyphene"/>
</dbReference>
<dbReference type="DrugBank" id="DB01209">
    <property type="generic name" value="Dezocine"/>
</dbReference>
<dbReference type="DrugBank" id="DB01452">
    <property type="generic name" value="Diamorphine"/>
</dbReference>
<dbReference type="DrugBank" id="DB11938">
    <property type="generic name" value="Difelikefalin"/>
</dbReference>
<dbReference type="DrugBank" id="DB01565">
    <property type="generic name" value="Dihydromorphine"/>
</dbReference>
<dbReference type="DrugBank" id="DB19094">
    <property type="generic name" value="Dimepheptanol"/>
</dbReference>
<dbReference type="DrugBank" id="DB01548">
    <property type="generic name" value="Diprenorphine"/>
</dbReference>
<dbReference type="DrugBank" id="DB08861">
    <property type="generic name" value="DPDPE"/>
</dbReference>
<dbReference type="DrugBank" id="DB16146">
    <property type="generic name" value="Dynorphin"/>
</dbReference>
<dbReference type="DrugBank" id="DB09272">
    <property type="generic name" value="Eluxadoline"/>
</dbReference>
<dbReference type="DrugBank" id="DB16967">
    <property type="generic name" value="Enadoline"/>
</dbReference>
<dbReference type="DrugBank" id="DB01462">
    <property type="generic name" value="Etonitazene"/>
</dbReference>
<dbReference type="DrugBank" id="DB01497">
    <property type="generic name" value="Etorphine"/>
</dbReference>
<dbReference type="DrugBank" id="DB00813">
    <property type="generic name" value="Fentanyl"/>
</dbReference>
<dbReference type="DrugBank" id="DB00327">
    <property type="generic name" value="Hydromorphone"/>
</dbReference>
<dbReference type="DrugBank" id="DB01221">
    <property type="generic name" value="Ketamine"/>
</dbReference>
<dbReference type="DrugBank" id="DB06738">
    <property type="generic name" value="Ketobemidone"/>
</dbReference>
<dbReference type="DrugBank" id="DB00555">
    <property type="generic name" value="Lamotrigine"/>
</dbReference>
<dbReference type="DrugBank" id="DB00825">
    <property type="generic name" value="Levomenthol"/>
</dbReference>
<dbReference type="DrugBank" id="DB00854">
    <property type="generic name" value="Levorphanol"/>
</dbReference>
<dbReference type="DrugBank" id="DB09174">
    <property type="generic name" value="Lofentanil"/>
</dbReference>
<dbReference type="DrugBank" id="DB00836">
    <property type="generic name" value="Loperamide"/>
</dbReference>
<dbReference type="DrugBank" id="DB14146">
    <property type="generic name" value="Loxicodegol"/>
</dbReference>
<dbReference type="DrugBank" id="DB00454">
    <property type="generic name" value="Meperidine"/>
</dbReference>
<dbReference type="DrugBank" id="DB06800">
    <property type="generic name" value="Methylnaltrexone"/>
</dbReference>
<dbReference type="DrugBank" id="DB06148">
    <property type="generic name" value="Mianserin"/>
</dbReference>
<dbReference type="DrugBank" id="DB00370">
    <property type="generic name" value="Mirtazapine"/>
</dbReference>
<dbReference type="DrugBank" id="DB00295">
    <property type="generic name" value="Morphine"/>
</dbReference>
<dbReference type="DrugBank" id="DB06409">
    <property type="generic name" value="Morphine glucuronide"/>
</dbReference>
<dbReference type="DrugBank" id="DB00844">
    <property type="generic name" value="Nalbuphine"/>
</dbReference>
<dbReference type="DrugBank" id="DB11691">
    <property type="generic name" value="Naldemedine"/>
</dbReference>
<dbReference type="DrugBank" id="DB06230">
    <property type="generic name" value="Nalmefene"/>
</dbReference>
<dbReference type="DrugBank" id="DB11490">
    <property type="generic name" value="Nalorphine"/>
</dbReference>
<dbReference type="DrugBank" id="DB01183">
    <property type="generic name" value="Naloxone"/>
</dbReference>
<dbReference type="DrugBank" id="DB00704">
    <property type="generic name" value="Naltrexone"/>
</dbReference>
<dbReference type="DrugBank" id="DB11130">
    <property type="generic name" value="Opium"/>
</dbReference>
<dbReference type="DrugBank" id="DB16072">
    <property type="generic name" value="ORP-101"/>
</dbReference>
<dbReference type="DrugBank" id="DB00497">
    <property type="generic name" value="Oxycodone"/>
</dbReference>
<dbReference type="DrugBank" id="DB00652">
    <property type="generic name" value="Pentazocine"/>
</dbReference>
<dbReference type="DrugBank" id="DB11186">
    <property type="generic name" value="Pentoxyverine"/>
</dbReference>
<dbReference type="DrugBank" id="DB09209">
    <property type="generic name" value="Pholcodine"/>
</dbReference>
<dbReference type="DrugBank" id="DB00396">
    <property type="generic name" value="Progesterone"/>
</dbReference>
<dbReference type="DrugBank" id="DB00899">
    <property type="generic name" value="Remifentanil"/>
</dbReference>
<dbReference type="DrugBank" id="DB12327">
    <property type="generic name" value="Salvinorin A"/>
</dbReference>
<dbReference type="DrugBank" id="DB12543">
    <property type="generic name" value="Samidorphan"/>
</dbReference>
<dbReference type="DrugBank" id="DB12704">
    <property type="generic name" value="Spiradoline"/>
</dbReference>
<dbReference type="DrugBank" id="DB00708">
    <property type="generic name" value="Sufentanil"/>
</dbReference>
<dbReference type="DrugBank" id="DB06204">
    <property type="generic name" value="Tapentadol"/>
</dbReference>
<dbReference type="DrugBank" id="DB00193">
    <property type="generic name" value="Tramadol"/>
</dbReference>
<dbReference type="DrugBank" id="DB05046">
    <property type="generic name" value="V1003"/>
</dbReference>
<dbReference type="DrugCentral" id="P41145"/>
<dbReference type="GuidetoPHARMACOLOGY" id="318"/>
<dbReference type="TCDB" id="9.A.14.13.32">
    <property type="family name" value="the g-protein-coupled receptor (gpcr) family"/>
</dbReference>
<dbReference type="GlyCosmos" id="P41145">
    <property type="glycosylation" value="2 sites, No reported glycans"/>
</dbReference>
<dbReference type="GlyGen" id="P41145">
    <property type="glycosylation" value="3 sites"/>
</dbReference>
<dbReference type="iPTMnet" id="P41145"/>
<dbReference type="PhosphoSitePlus" id="P41145"/>
<dbReference type="BioMuta" id="OPRK1"/>
<dbReference type="DMDM" id="116242691"/>
<dbReference type="MassIVE" id="P41145"/>
<dbReference type="PaxDb" id="9606-ENSP00000265572"/>
<dbReference type="PeptideAtlas" id="P41145"/>
<dbReference type="ProteomicsDB" id="15940"/>
<dbReference type="ProteomicsDB" id="55403">
    <molecule id="P41145-1"/>
</dbReference>
<dbReference type="ABCD" id="P41145">
    <property type="antibodies" value="1 sequenced antibody"/>
</dbReference>
<dbReference type="Antibodypedia" id="11640">
    <property type="antibodies" value="396 antibodies from 37 providers"/>
</dbReference>
<dbReference type="DNASU" id="4986"/>
<dbReference type="Ensembl" id="ENST00000265572.8">
    <molecule id="P41145-1"/>
    <property type="protein sequence ID" value="ENSP00000265572.3"/>
    <property type="gene ID" value="ENSG00000082556.14"/>
</dbReference>
<dbReference type="Ensembl" id="ENST00000520287.5">
    <molecule id="P41145-1"/>
    <property type="protein sequence ID" value="ENSP00000429706.1"/>
    <property type="gene ID" value="ENSG00000082556.14"/>
</dbReference>
<dbReference type="Ensembl" id="ENST00000524278.5">
    <molecule id="P41145-2"/>
    <property type="protein sequence ID" value="ENSP00000430923.1"/>
    <property type="gene ID" value="ENSG00000082556.14"/>
</dbReference>
<dbReference type="GeneID" id="4986"/>
<dbReference type="KEGG" id="hsa:4986"/>
<dbReference type="MANE-Select" id="ENST00000265572.8">
    <property type="protein sequence ID" value="ENSP00000265572.3"/>
    <property type="RefSeq nucleotide sequence ID" value="NM_000912.5"/>
    <property type="RefSeq protein sequence ID" value="NP_000903.2"/>
</dbReference>
<dbReference type="UCSC" id="uc003xrh.2">
    <molecule id="P41145-1"/>
    <property type="organism name" value="human"/>
</dbReference>
<dbReference type="AGR" id="HGNC:8154"/>
<dbReference type="CTD" id="4986"/>
<dbReference type="DisGeNET" id="4986"/>
<dbReference type="GeneCards" id="OPRK1"/>
<dbReference type="HGNC" id="HGNC:8154">
    <property type="gene designation" value="OPRK1"/>
</dbReference>
<dbReference type="HPA" id="ENSG00000082556">
    <property type="expression patterns" value="Tissue enhanced (brain, prostate, skeletal muscle)"/>
</dbReference>
<dbReference type="MIM" id="165196">
    <property type="type" value="gene"/>
</dbReference>
<dbReference type="neXtProt" id="NX_P41145"/>
<dbReference type="OpenTargets" id="ENSG00000082556"/>
<dbReference type="PharmGKB" id="PA31943"/>
<dbReference type="VEuPathDB" id="HostDB:ENSG00000082556"/>
<dbReference type="eggNOG" id="KOG3656">
    <property type="taxonomic scope" value="Eukaryota"/>
</dbReference>
<dbReference type="GeneTree" id="ENSGT00940000157341"/>
<dbReference type="HOGENOM" id="CLU_009579_8_1_1"/>
<dbReference type="InParanoid" id="P41145"/>
<dbReference type="OMA" id="DTFMKIC"/>
<dbReference type="OrthoDB" id="6076970at2759"/>
<dbReference type="PAN-GO" id="P41145">
    <property type="GO annotations" value="7 GO annotations based on evolutionary models"/>
</dbReference>
<dbReference type="PhylomeDB" id="P41145"/>
<dbReference type="TreeFam" id="TF315737"/>
<dbReference type="PathwayCommons" id="P41145"/>
<dbReference type="Reactome" id="R-HSA-375276">
    <property type="pathway name" value="Peptide ligand-binding receptors"/>
</dbReference>
<dbReference type="Reactome" id="R-HSA-418594">
    <property type="pathway name" value="G alpha (i) signalling events"/>
</dbReference>
<dbReference type="Reactome" id="R-HSA-9022699">
    <property type="pathway name" value="MECP2 regulates neuronal receptors and channels"/>
</dbReference>
<dbReference type="SignaLink" id="P41145"/>
<dbReference type="SIGNOR" id="P41145"/>
<dbReference type="BioGRID-ORCS" id="4986">
    <property type="hits" value="11 hits in 1154 CRISPR screens"/>
</dbReference>
<dbReference type="EvolutionaryTrace" id="P41145"/>
<dbReference type="GeneWiki" id="%CE%9A-opioid_receptor"/>
<dbReference type="GenomeRNAi" id="4986"/>
<dbReference type="Pharos" id="P41145">
    <property type="development level" value="Tclin"/>
</dbReference>
<dbReference type="PRO" id="PR:P41145"/>
<dbReference type="Proteomes" id="UP000005640">
    <property type="component" value="Chromosome 8"/>
</dbReference>
<dbReference type="RNAct" id="P41145">
    <property type="molecule type" value="protein"/>
</dbReference>
<dbReference type="Bgee" id="ENSG00000082556">
    <property type="expression patterns" value="Expressed in endothelial cell and 74 other cell types or tissues"/>
</dbReference>
<dbReference type="ExpressionAtlas" id="P41145">
    <property type="expression patterns" value="baseline and differential"/>
</dbReference>
<dbReference type="GO" id="GO:0043679">
    <property type="term" value="C:axon terminus"/>
    <property type="evidence" value="ECO:0007669"/>
    <property type="project" value="Ensembl"/>
</dbReference>
<dbReference type="GO" id="GO:0005829">
    <property type="term" value="C:cytosol"/>
    <property type="evidence" value="ECO:0000314"/>
    <property type="project" value="HPA"/>
</dbReference>
<dbReference type="GO" id="GO:0030425">
    <property type="term" value="C:dendrite"/>
    <property type="evidence" value="ECO:0007669"/>
    <property type="project" value="Ensembl"/>
</dbReference>
<dbReference type="GO" id="GO:0016020">
    <property type="term" value="C:membrane"/>
    <property type="evidence" value="ECO:0000314"/>
    <property type="project" value="UniProtKB"/>
</dbReference>
<dbReference type="GO" id="GO:0005739">
    <property type="term" value="C:mitochondrion"/>
    <property type="evidence" value="ECO:0007669"/>
    <property type="project" value="Ensembl"/>
</dbReference>
<dbReference type="GO" id="GO:0043005">
    <property type="term" value="C:neuron projection"/>
    <property type="evidence" value="ECO:0000318"/>
    <property type="project" value="GO_Central"/>
</dbReference>
<dbReference type="GO" id="GO:0005654">
    <property type="term" value="C:nucleoplasm"/>
    <property type="evidence" value="ECO:0000314"/>
    <property type="project" value="HPA"/>
</dbReference>
<dbReference type="GO" id="GO:0043204">
    <property type="term" value="C:perikaryon"/>
    <property type="evidence" value="ECO:0007669"/>
    <property type="project" value="Ensembl"/>
</dbReference>
<dbReference type="GO" id="GO:0005886">
    <property type="term" value="C:plasma membrane"/>
    <property type="evidence" value="ECO:0000314"/>
    <property type="project" value="HPA"/>
</dbReference>
<dbReference type="GO" id="GO:0045211">
    <property type="term" value="C:postsynaptic membrane"/>
    <property type="evidence" value="ECO:0007669"/>
    <property type="project" value="Ensembl"/>
</dbReference>
<dbReference type="GO" id="GO:0042734">
    <property type="term" value="C:presynaptic membrane"/>
    <property type="evidence" value="ECO:0007669"/>
    <property type="project" value="Ensembl"/>
</dbReference>
<dbReference type="GO" id="GO:0016529">
    <property type="term" value="C:sarcoplasmic reticulum"/>
    <property type="evidence" value="ECO:0007669"/>
    <property type="project" value="Ensembl"/>
</dbReference>
<dbReference type="GO" id="GO:0030672">
    <property type="term" value="C:synaptic vesicle membrane"/>
    <property type="evidence" value="ECO:0007669"/>
    <property type="project" value="Ensembl"/>
</dbReference>
<dbReference type="GO" id="GO:0030315">
    <property type="term" value="C:T-tubule"/>
    <property type="evidence" value="ECO:0007669"/>
    <property type="project" value="Ensembl"/>
</dbReference>
<dbReference type="GO" id="GO:0038048">
    <property type="term" value="F:dynorphin receptor activity"/>
    <property type="evidence" value="ECO:0000314"/>
    <property type="project" value="UniProtKB"/>
</dbReference>
<dbReference type="GO" id="GO:0004985">
    <property type="term" value="F:G protein-coupled opioid receptor activity"/>
    <property type="evidence" value="ECO:0000314"/>
    <property type="project" value="UniProtKB"/>
</dbReference>
<dbReference type="GO" id="GO:0042923">
    <property type="term" value="F:neuropeptide binding"/>
    <property type="evidence" value="ECO:0000318"/>
    <property type="project" value="GO_Central"/>
</dbReference>
<dbReference type="GO" id="GO:0033612">
    <property type="term" value="F:receptor serine/threonine kinase binding"/>
    <property type="evidence" value="ECO:0007669"/>
    <property type="project" value="Ensembl"/>
</dbReference>
<dbReference type="GO" id="GO:0007193">
    <property type="term" value="P:adenylate cyclase-inhibiting G protein-coupled receptor signaling pathway"/>
    <property type="evidence" value="ECO:0000304"/>
    <property type="project" value="ProtInc"/>
</dbReference>
<dbReference type="GO" id="GO:0031635">
    <property type="term" value="P:adenylate cyclase-inhibiting opioid receptor signaling pathway"/>
    <property type="evidence" value="ECO:0000314"/>
    <property type="project" value="UniProtKB"/>
</dbReference>
<dbReference type="GO" id="GO:0048148">
    <property type="term" value="P:behavioral response to cocaine"/>
    <property type="evidence" value="ECO:0007669"/>
    <property type="project" value="Ensembl"/>
</dbReference>
<dbReference type="GO" id="GO:0071333">
    <property type="term" value="P:cellular response to glucose stimulus"/>
    <property type="evidence" value="ECO:0007669"/>
    <property type="project" value="Ensembl"/>
</dbReference>
<dbReference type="GO" id="GO:0071222">
    <property type="term" value="P:cellular response to lipopolysaccharide"/>
    <property type="evidence" value="ECO:0007669"/>
    <property type="project" value="Ensembl"/>
</dbReference>
<dbReference type="GO" id="GO:0007268">
    <property type="term" value="P:chemical synaptic transmission"/>
    <property type="evidence" value="ECO:0000304"/>
    <property type="project" value="ProtInc"/>
</dbReference>
<dbReference type="GO" id="GO:1990708">
    <property type="term" value="P:conditioned place preference"/>
    <property type="evidence" value="ECO:0007669"/>
    <property type="project" value="Ensembl"/>
</dbReference>
<dbReference type="GO" id="GO:0051607">
    <property type="term" value="P:defense response to virus"/>
    <property type="evidence" value="ECO:0000314"/>
    <property type="project" value="UniProtKB"/>
</dbReference>
<dbReference type="GO" id="GO:0042755">
    <property type="term" value="P:eating behavior"/>
    <property type="evidence" value="ECO:0007669"/>
    <property type="project" value="Ensembl"/>
</dbReference>
<dbReference type="GO" id="GO:0044849">
    <property type="term" value="P:estrous cycle"/>
    <property type="evidence" value="ECO:0007669"/>
    <property type="project" value="Ensembl"/>
</dbReference>
<dbReference type="GO" id="GO:0038003">
    <property type="term" value="P:G protein-coupled opioid receptor signaling pathway"/>
    <property type="evidence" value="ECO:0000314"/>
    <property type="project" value="UniProtKB"/>
</dbReference>
<dbReference type="GO" id="GO:0006955">
    <property type="term" value="P:immune response"/>
    <property type="evidence" value="ECO:0000314"/>
    <property type="project" value="UniProtKB"/>
</dbReference>
<dbReference type="GO" id="GO:0007626">
    <property type="term" value="P:locomotory behavior"/>
    <property type="evidence" value="ECO:0000250"/>
    <property type="project" value="UniProtKB"/>
</dbReference>
<dbReference type="GO" id="GO:0042711">
    <property type="term" value="P:maternal behavior"/>
    <property type="evidence" value="ECO:0007669"/>
    <property type="project" value="Ensembl"/>
</dbReference>
<dbReference type="GO" id="GO:0033685">
    <property type="term" value="P:negative regulation of luteinizing hormone secretion"/>
    <property type="evidence" value="ECO:0007669"/>
    <property type="project" value="Ensembl"/>
</dbReference>
<dbReference type="GO" id="GO:0007218">
    <property type="term" value="P:neuropeptide signaling pathway"/>
    <property type="evidence" value="ECO:0000318"/>
    <property type="project" value="GO_Central"/>
</dbReference>
<dbReference type="GO" id="GO:0007200">
    <property type="term" value="P:phospholipase C-activating G protein-coupled receptor signaling pathway"/>
    <property type="evidence" value="ECO:0000250"/>
    <property type="project" value="UniProtKB"/>
</dbReference>
<dbReference type="GO" id="GO:0033603">
    <property type="term" value="P:positive regulation of dopamine secretion"/>
    <property type="evidence" value="ECO:0007669"/>
    <property type="project" value="Ensembl"/>
</dbReference>
<dbReference type="GO" id="GO:1904000">
    <property type="term" value="P:positive regulation of eating behavior"/>
    <property type="evidence" value="ECO:0007669"/>
    <property type="project" value="Ensembl"/>
</dbReference>
<dbReference type="GO" id="GO:1900745">
    <property type="term" value="P:positive regulation of p38MAPK cascade"/>
    <property type="evidence" value="ECO:0007669"/>
    <property type="project" value="Ensembl"/>
</dbReference>
<dbReference type="GO" id="GO:1901381">
    <property type="term" value="P:positive regulation of potassium ion transmembrane transport"/>
    <property type="evidence" value="ECO:0007669"/>
    <property type="project" value="Ensembl"/>
</dbReference>
<dbReference type="GO" id="GO:0046877">
    <property type="term" value="P:regulation of saliva secretion"/>
    <property type="evidence" value="ECO:0000250"/>
    <property type="project" value="UniProtKB"/>
</dbReference>
<dbReference type="GO" id="GO:1903937">
    <property type="term" value="P:response to acrylamide"/>
    <property type="evidence" value="ECO:0007669"/>
    <property type="project" value="Ensembl"/>
</dbReference>
<dbReference type="GO" id="GO:0043627">
    <property type="term" value="P:response to estrogen"/>
    <property type="evidence" value="ECO:0007669"/>
    <property type="project" value="Ensembl"/>
</dbReference>
<dbReference type="GO" id="GO:0045471">
    <property type="term" value="P:response to ethanol"/>
    <property type="evidence" value="ECO:0007669"/>
    <property type="project" value="Ensembl"/>
</dbReference>
<dbReference type="GO" id="GO:0032868">
    <property type="term" value="P:response to insulin"/>
    <property type="evidence" value="ECO:0007669"/>
    <property type="project" value="Ensembl"/>
</dbReference>
<dbReference type="GO" id="GO:0035094">
    <property type="term" value="P:response to nicotine"/>
    <property type="evidence" value="ECO:0007669"/>
    <property type="project" value="Ensembl"/>
</dbReference>
<dbReference type="GO" id="GO:0007600">
    <property type="term" value="P:sensory perception"/>
    <property type="evidence" value="ECO:0000304"/>
    <property type="project" value="ProtInc"/>
</dbReference>
<dbReference type="GO" id="GO:0019233">
    <property type="term" value="P:sensory perception of pain"/>
    <property type="evidence" value="ECO:0000250"/>
    <property type="project" value="UniProtKB"/>
</dbReference>
<dbReference type="GO" id="GO:0050951">
    <property type="term" value="P:sensory perception of temperature stimulus"/>
    <property type="evidence" value="ECO:0007669"/>
    <property type="project" value="Ensembl"/>
</dbReference>
<dbReference type="CDD" id="cd15091">
    <property type="entry name" value="7tmA_Kappa_opioid_R"/>
    <property type="match status" value="1"/>
</dbReference>
<dbReference type="FunFam" id="1.20.1070.10:FF:000014">
    <property type="entry name" value="Kappa-type opioid receptor 1"/>
    <property type="match status" value="1"/>
</dbReference>
<dbReference type="Gene3D" id="1.20.1070.10">
    <property type="entry name" value="Rhodopsin 7-helix transmembrane proteins"/>
    <property type="match status" value="1"/>
</dbReference>
<dbReference type="InterPro" id="IPR000276">
    <property type="entry name" value="GPCR_Rhodpsn"/>
</dbReference>
<dbReference type="InterPro" id="IPR017452">
    <property type="entry name" value="GPCR_Rhodpsn_7TM"/>
</dbReference>
<dbReference type="InterPro" id="IPR000452">
    <property type="entry name" value="Kappa_opi_rcpt"/>
</dbReference>
<dbReference type="InterPro" id="IPR001418">
    <property type="entry name" value="Opioid_rcpt"/>
</dbReference>
<dbReference type="PANTHER" id="PTHR24229:SF1">
    <property type="entry name" value="KAPPA-TYPE OPIOID RECEPTOR"/>
    <property type="match status" value="1"/>
</dbReference>
<dbReference type="PANTHER" id="PTHR24229">
    <property type="entry name" value="NEUROPEPTIDES RECEPTOR"/>
    <property type="match status" value="1"/>
</dbReference>
<dbReference type="Pfam" id="PF00001">
    <property type="entry name" value="7tm_1"/>
    <property type="match status" value="1"/>
</dbReference>
<dbReference type="PRINTS" id="PR00237">
    <property type="entry name" value="GPCRRHODOPSN"/>
</dbReference>
<dbReference type="PRINTS" id="PR00532">
    <property type="entry name" value="KAPPAOPIOIDR"/>
</dbReference>
<dbReference type="PRINTS" id="PR00384">
    <property type="entry name" value="OPIOIDR"/>
</dbReference>
<dbReference type="SMART" id="SM01381">
    <property type="entry name" value="7TM_GPCR_Srsx"/>
    <property type="match status" value="1"/>
</dbReference>
<dbReference type="SUPFAM" id="SSF81321">
    <property type="entry name" value="Family A G protein-coupled receptor-like"/>
    <property type="match status" value="1"/>
</dbReference>
<dbReference type="PROSITE" id="PS00237">
    <property type="entry name" value="G_PROTEIN_RECEP_F1_1"/>
    <property type="match status" value="1"/>
</dbReference>
<dbReference type="PROSITE" id="PS50262">
    <property type="entry name" value="G_PROTEIN_RECEP_F1_2"/>
    <property type="match status" value="1"/>
</dbReference>
<gene>
    <name type="primary">OPRK1</name>
    <name type="synonym">OPRK</name>
</gene>
<sequence length="380" mass="42645">MDSPIQIFRGEPGPTCAPSACLPPNSSAWFPGWAEPDSNGSAGSEDAQLEPAHISPAIPVIITAVYSVVFVVGLVGNSLVMFVIIRYTKMKTATNIYIFNLALADALVTTTMPFQSTVYLMNSWPFGDVLCKIVISIDYYNMFTSIFTLTMMSVDRYIAVCHPVKALDFRTPLKAKIINICIWLLSSSVGISAIVLGGTKVREDVDVIECSLQFPDDDYSWWDLFMKICVFIFAFVIPVLIIIVCYTLMILRLKSVRLLSGSREKDRNLRRITRLVLVVVAVFVVCWTPIHIFILVEALGSTSHSTAALSSYYFCIALGYTNSSLNPILYAFLDENFKRCFRDFCFPLKMRMERQSTSRVRNTVQDPAYLRDIDGMNKPV</sequence>
<accession>P41145</accession>
<accession>E5RHC9</accession>
<accession>Q499G4</accession>
<name>OPRK_HUMAN</name>
<protein>
    <recommendedName>
        <fullName>Kappa-type opioid receptor</fullName>
        <shortName>K-OR-1</shortName>
        <shortName>KOR-1</shortName>
    </recommendedName>
</protein>
<keyword id="KW-0002">3D-structure</keyword>
<keyword id="KW-0025">Alternative splicing</keyword>
<keyword id="KW-0085">Behavior</keyword>
<keyword id="KW-1003">Cell membrane</keyword>
<keyword id="KW-1015">Disulfide bond</keyword>
<keyword id="KW-0297">G-protein coupled receptor</keyword>
<keyword id="KW-0325">Glycoprotein</keyword>
<keyword id="KW-0449">Lipoprotein</keyword>
<keyword id="KW-0472">Membrane</keyword>
<keyword id="KW-0564">Palmitate</keyword>
<keyword id="KW-1267">Proteomics identification</keyword>
<keyword id="KW-0675">Receptor</keyword>
<keyword id="KW-1185">Reference proteome</keyword>
<keyword id="KW-0807">Transducer</keyword>
<keyword id="KW-0812">Transmembrane</keyword>
<keyword id="KW-1133">Transmembrane helix</keyword>
<comment type="function">
    <text evidence="3 6 7 8">G-protein coupled opioid receptor that functions as a receptor for endogenous alpha-neoendorphins and dynorphins, but has low affinity for beta-endorphins. Also functions as a receptor for various synthetic opioids and for the psychoactive diterpene salvinorin A. Ligand binding causes a conformation change that triggers signaling via guanine nucleotide-binding proteins (G proteins) and modulates the activity of down-stream effectors, such as adenylate cyclase. Signaling leads to the inhibition of adenylate cyclase activity. Inhibits neurotransmitter release by reducing calcium ion currents and increasing potassium ion conductance. Plays a role in the perception of pain. Plays a role in mediating reduced physical activity upon treatment with synthetic opioids. Plays a role in the regulation of salivation in response to synthetic opioids. May play a role in arousal and regulation of autonomic and neuroendocrine functions.</text>
</comment>
<comment type="subunit">
    <text evidence="3 4 6">Interacts with NHERF1. Interacts with GABARAPL1.</text>
</comment>
<comment type="interaction">
    <interactant intactId="EBI-925028">
        <id>P41145</id>
    </interactant>
    <interactant intactId="EBI-2875891">
        <id>P35414</id>
        <label>APLNR</label>
    </interactant>
    <organismsDiffer>false</organismsDiffer>
    <experiments>4</experiments>
</comment>
<comment type="interaction">
    <interactant intactId="EBI-925028">
        <id>P41145</id>
    </interactant>
    <interactant intactId="EBI-746969">
        <id>Q9H0R8</id>
        <label>GABARAPL1</label>
    </interactant>
    <organismsDiffer>false</organismsDiffer>
    <experiments>5</experiments>
</comment>
<comment type="interaction">
    <interactant intactId="EBI-925028">
        <id>P41145</id>
    </interactant>
    <interactant intactId="EBI-3919611">
        <id>Q16617</id>
        <label>NKG7</label>
    </interactant>
    <organismsDiffer>false</organismsDiffer>
    <experiments>3</experiments>
</comment>
<comment type="subcellular location">
    <subcellularLocation>
        <location evidence="3 6 7 8">Cell membrane</location>
        <topology evidence="3 6 7 8">Multi-pass membrane protein</topology>
    </subcellularLocation>
</comment>
<comment type="alternative products">
    <event type="alternative splicing"/>
    <isoform>
        <id>P41145-1</id>
        <name>1</name>
        <sequence type="displayed"/>
    </isoform>
    <isoform>
        <id>P41145-2</id>
        <name>2</name>
        <sequence type="described" ref="VSP_055313"/>
    </isoform>
</comment>
<comment type="tissue specificity">
    <text evidence="7 8">Detected in brain and placenta.</text>
</comment>
<comment type="similarity">
    <text evidence="2">Belongs to the G-protein coupled receptor 1 family.</text>
</comment>
<comment type="online information" name="Wikipedia">
    <link uri="https://en.wikipedia.org/wiki/Kappa_opioid_receptor"/>
    <text>Kappa opioid receptor entry</text>
</comment>
<feature type="chain" id="PRO_0000069967" description="Kappa-type opioid receptor">
    <location>
        <begin position="1"/>
        <end position="380"/>
    </location>
</feature>
<feature type="topological domain" description="Extracellular">
    <location>
        <begin position="1"/>
        <end position="57"/>
    </location>
</feature>
<feature type="transmembrane region" description="Helical; Name=1">
    <location>
        <begin position="58"/>
        <end position="85"/>
    </location>
</feature>
<feature type="topological domain" description="Cytoplasmic">
    <location>
        <begin position="86"/>
        <end position="95"/>
    </location>
</feature>
<feature type="transmembrane region" description="Helical; Name=2">
    <location>
        <begin position="96"/>
        <end position="119"/>
    </location>
</feature>
<feature type="topological domain" description="Extracellular">
    <location>
        <begin position="120"/>
        <end position="132"/>
    </location>
</feature>
<feature type="transmembrane region" description="Helical; Name=3">
    <location>
        <begin position="133"/>
        <end position="154"/>
    </location>
</feature>
<feature type="topological domain" description="Cytoplasmic">
    <location>
        <begin position="155"/>
        <end position="173"/>
    </location>
</feature>
<feature type="transmembrane region" description="Helical; Name=4">
    <location>
        <begin position="174"/>
        <end position="196"/>
    </location>
</feature>
<feature type="topological domain" description="Extracellular">
    <location>
        <begin position="197"/>
        <end position="222"/>
    </location>
</feature>
<feature type="transmembrane region" description="Helical; Name=5">
    <location>
        <begin position="223"/>
        <end position="247"/>
    </location>
</feature>
<feature type="topological domain" description="Cytoplasmic">
    <location>
        <begin position="248"/>
        <end position="274"/>
    </location>
</feature>
<feature type="transmembrane region" description="Helical; Name=6">
    <location>
        <begin position="275"/>
        <end position="296"/>
    </location>
</feature>
<feature type="topological domain" description="Extracellular">
    <location>
        <begin position="297"/>
        <end position="311"/>
    </location>
</feature>
<feature type="transmembrane region" description="Helical; Name=7">
    <location>
        <begin position="312"/>
        <end position="333"/>
    </location>
</feature>
<feature type="topological domain" description="Cytoplasmic">
    <location>
        <begin position="334"/>
        <end position="380"/>
    </location>
</feature>
<feature type="lipid moiety-binding region" description="S-palmitoyl cysteine" evidence="1">
    <location>
        <position position="345"/>
    </location>
</feature>
<feature type="glycosylation site" description="N-linked (GlcNAc...) asparagine" evidence="5">
    <location>
        <position position="25"/>
    </location>
</feature>
<feature type="glycosylation site" description="N-linked (GlcNAc...) asparagine" evidence="5">
    <location>
        <position position="39"/>
    </location>
</feature>
<feature type="disulfide bond" evidence="2 6">
    <location>
        <begin position="131"/>
        <end position="210"/>
    </location>
</feature>
<feature type="splice variant" id="VSP_055313" description="In isoform 2." evidence="9">
    <location>
        <begin position="1"/>
        <end position="89"/>
    </location>
</feature>
<feature type="sequence variant" id="VAR_028067" description="In dbSNP:rs9282808.">
    <original>D</original>
    <variation>N</variation>
    <location>
        <position position="374"/>
    </location>
</feature>
<feature type="sequence conflict" description="In Ref. 1; AAA20985 and 4; AAM21070." evidence="10" ref="1 4">
    <original>D</original>
    <variation>E</variation>
    <location>
        <position position="2"/>
    </location>
</feature>
<feature type="helix" evidence="18">
    <location>
        <begin position="61"/>
        <end position="86"/>
    </location>
</feature>
<feature type="strand" evidence="17">
    <location>
        <begin position="90"/>
        <end position="92"/>
    </location>
</feature>
<feature type="helix" evidence="18">
    <location>
        <begin position="93"/>
        <end position="109"/>
    </location>
</feature>
<feature type="helix" evidence="18">
    <location>
        <begin position="112"/>
        <end position="120"/>
    </location>
</feature>
<feature type="strand" evidence="18">
    <location>
        <begin position="121"/>
        <end position="123"/>
    </location>
</feature>
<feature type="helix" evidence="18">
    <location>
        <begin position="128"/>
        <end position="161"/>
    </location>
</feature>
<feature type="helix" evidence="18">
    <location>
        <begin position="163"/>
        <end position="166"/>
    </location>
</feature>
<feature type="turn" evidence="18">
    <location>
        <begin position="167"/>
        <end position="169"/>
    </location>
</feature>
<feature type="helix" evidence="18">
    <location>
        <begin position="172"/>
        <end position="194"/>
    </location>
</feature>
<feature type="strand" evidence="18">
    <location>
        <begin position="199"/>
        <end position="201"/>
    </location>
</feature>
<feature type="strand" evidence="11">
    <location>
        <begin position="203"/>
        <end position="206"/>
    </location>
</feature>
<feature type="strand" evidence="18">
    <location>
        <begin position="208"/>
        <end position="210"/>
    </location>
</feature>
<feature type="strand" evidence="15">
    <location>
        <begin position="216"/>
        <end position="218"/>
    </location>
</feature>
<feature type="helix" evidence="18">
    <location>
        <begin position="222"/>
        <end position="234"/>
    </location>
</feature>
<feature type="helix" evidence="13">
    <location>
        <begin position="246"/>
        <end position="253"/>
    </location>
</feature>
<feature type="turn" evidence="12">
    <location>
        <begin position="257"/>
        <end position="259"/>
    </location>
</feature>
<feature type="strand" evidence="18">
    <location>
        <begin position="260"/>
        <end position="262"/>
    </location>
</feature>
<feature type="helix" evidence="13">
    <location>
        <begin position="263"/>
        <end position="277"/>
    </location>
</feature>
<feature type="turn" evidence="14">
    <location>
        <begin position="297"/>
        <end position="299"/>
    </location>
</feature>
<feature type="strand" evidence="14">
    <location>
        <begin position="300"/>
        <end position="302"/>
    </location>
</feature>
<feature type="helix" evidence="18">
    <location>
        <begin position="307"/>
        <end position="330"/>
    </location>
</feature>
<feature type="turn" evidence="16">
    <location>
        <begin position="331"/>
        <end position="333"/>
    </location>
</feature>
<feature type="turn" evidence="18">
    <location>
        <begin position="335"/>
        <end position="338"/>
    </location>
</feature>
<proteinExistence type="evidence at protein level"/>
<reference key="1">
    <citation type="journal article" date="1994" name="Biochem. Biophys. Res. Commun.">
        <title>Isolation of a human kappa opioid receptor cDNA from placenta.</title>
        <authorList>
            <person name="Mansson E."/>
            <person name="Bare L.A."/>
            <person name="Yang D."/>
        </authorList>
    </citation>
    <scope>NUCLEOTIDE SEQUENCE [MRNA] (ISOFORM 1)</scope>
    <scope>FUNCTION</scope>
    <scope>SUBCELLULAR LOCATION</scope>
    <scope>TISSUE SPECIFICITY</scope>
    <source>
        <tissue>Placenta</tissue>
    </source>
</reference>
<reference key="2">
    <citation type="journal article" date="1995" name="Proc. Natl. Acad. Sci. U.S.A.">
        <title>Kappa-opioid receptor in humans: cDNA and genomic cloning, chromosomal assignment, functional expression, pharmacology, and expression pattern in the central nervous system.</title>
        <authorList>
            <person name="Simonin F."/>
            <person name="Gaveriaus-Ruff C."/>
            <person name="Befort K."/>
            <person name="Lannes B."/>
            <person name="Micheletti G."/>
            <person name="Mattei M.-G."/>
            <person name="Charon G."/>
            <person name="Bloch B."/>
            <person name="Kieffer B."/>
        </authorList>
    </citation>
    <scope>NUCLEOTIDE SEQUENCE [MRNA] (ISOFORM 1)</scope>
    <scope>FUNCTION</scope>
    <scope>SUBCELLULAR LOCATION</scope>
    <scope>TISSUE SPECIFICITY</scope>
    <source>
        <tissue>Placenta</tissue>
    </source>
</reference>
<reference key="3">
    <citation type="journal article" date="1995" name="Life Sci.">
        <title>Cloning of a human kappa opioid receptor from the brain.</title>
        <authorList>
            <person name="Zhu J."/>
            <person name="Chen C."/>
            <person name="Xue J.-C."/>
            <person name="Kunapuli S."/>
            <person name="Deriel J.K."/>
            <person name="Liu-Chen L.-Y."/>
        </authorList>
    </citation>
    <scope>NUCLEOTIDE SEQUENCE [MRNA] (ISOFORM 1)</scope>
    <source>
        <tissue>Brain</tissue>
    </source>
</reference>
<reference key="4">
    <citation type="submission" date="2002-04" db="EMBL/GenBank/DDBJ databases">
        <title>cDNA clones of human proteins involved in signal transduction sequenced by the Guthrie cDNA resource center (www.cdna.org).</title>
        <authorList>
            <person name="Puhl H.L. III"/>
            <person name="Ikeda S.R."/>
            <person name="Aronstam R.S."/>
        </authorList>
    </citation>
    <scope>NUCLEOTIDE SEQUENCE [LARGE SCALE MRNA] (ISOFORM 1)</scope>
    <source>
        <tissue>Brain</tissue>
    </source>
</reference>
<reference key="5">
    <citation type="journal article" date="2004" name="Nat. Genet.">
        <title>Complete sequencing and characterization of 21,243 full-length human cDNAs.</title>
        <authorList>
            <person name="Ota T."/>
            <person name="Suzuki Y."/>
            <person name="Nishikawa T."/>
            <person name="Otsuki T."/>
            <person name="Sugiyama T."/>
            <person name="Irie R."/>
            <person name="Wakamatsu A."/>
            <person name="Hayashi K."/>
            <person name="Sato H."/>
            <person name="Nagai K."/>
            <person name="Kimura K."/>
            <person name="Makita H."/>
            <person name="Sekine M."/>
            <person name="Obayashi M."/>
            <person name="Nishi T."/>
            <person name="Shibahara T."/>
            <person name="Tanaka T."/>
            <person name="Ishii S."/>
            <person name="Yamamoto J."/>
            <person name="Saito K."/>
            <person name="Kawai Y."/>
            <person name="Isono Y."/>
            <person name="Nakamura Y."/>
            <person name="Nagahari K."/>
            <person name="Murakami K."/>
            <person name="Yasuda T."/>
            <person name="Iwayanagi T."/>
            <person name="Wagatsuma M."/>
            <person name="Shiratori A."/>
            <person name="Sudo H."/>
            <person name="Hosoiri T."/>
            <person name="Kaku Y."/>
            <person name="Kodaira H."/>
            <person name="Kondo H."/>
            <person name="Sugawara M."/>
            <person name="Takahashi M."/>
            <person name="Kanda K."/>
            <person name="Yokoi T."/>
            <person name="Furuya T."/>
            <person name="Kikkawa E."/>
            <person name="Omura Y."/>
            <person name="Abe K."/>
            <person name="Kamihara K."/>
            <person name="Katsuta N."/>
            <person name="Sato K."/>
            <person name="Tanikawa M."/>
            <person name="Yamazaki M."/>
            <person name="Ninomiya K."/>
            <person name="Ishibashi T."/>
            <person name="Yamashita H."/>
            <person name="Murakawa K."/>
            <person name="Fujimori K."/>
            <person name="Tanai H."/>
            <person name="Kimata M."/>
            <person name="Watanabe M."/>
            <person name="Hiraoka S."/>
            <person name="Chiba Y."/>
            <person name="Ishida S."/>
            <person name="Ono Y."/>
            <person name="Takiguchi S."/>
            <person name="Watanabe S."/>
            <person name="Yosida M."/>
            <person name="Hotuta T."/>
            <person name="Kusano J."/>
            <person name="Kanehori K."/>
            <person name="Takahashi-Fujii A."/>
            <person name="Hara H."/>
            <person name="Tanase T.-O."/>
            <person name="Nomura Y."/>
            <person name="Togiya S."/>
            <person name="Komai F."/>
            <person name="Hara R."/>
            <person name="Takeuchi K."/>
            <person name="Arita M."/>
            <person name="Imose N."/>
            <person name="Musashino K."/>
            <person name="Yuuki H."/>
            <person name="Oshima A."/>
            <person name="Sasaki N."/>
            <person name="Aotsuka S."/>
            <person name="Yoshikawa Y."/>
            <person name="Matsunawa H."/>
            <person name="Ichihara T."/>
            <person name="Shiohata N."/>
            <person name="Sano S."/>
            <person name="Moriya S."/>
            <person name="Momiyama H."/>
            <person name="Satoh N."/>
            <person name="Takami S."/>
            <person name="Terashima Y."/>
            <person name="Suzuki O."/>
            <person name="Nakagawa S."/>
            <person name="Senoh A."/>
            <person name="Mizoguchi H."/>
            <person name="Goto Y."/>
            <person name="Shimizu F."/>
            <person name="Wakebe H."/>
            <person name="Hishigaki H."/>
            <person name="Watanabe T."/>
            <person name="Sugiyama A."/>
            <person name="Takemoto M."/>
            <person name="Kawakami B."/>
            <person name="Yamazaki M."/>
            <person name="Watanabe K."/>
            <person name="Kumagai A."/>
            <person name="Itakura S."/>
            <person name="Fukuzumi Y."/>
            <person name="Fujimori Y."/>
            <person name="Komiyama M."/>
            <person name="Tashiro H."/>
            <person name="Tanigami A."/>
            <person name="Fujiwara T."/>
            <person name="Ono T."/>
            <person name="Yamada K."/>
            <person name="Fujii Y."/>
            <person name="Ozaki K."/>
            <person name="Hirao M."/>
            <person name="Ohmori Y."/>
            <person name="Kawabata A."/>
            <person name="Hikiji T."/>
            <person name="Kobatake N."/>
            <person name="Inagaki H."/>
            <person name="Ikema Y."/>
            <person name="Okamoto S."/>
            <person name="Okitani R."/>
            <person name="Kawakami T."/>
            <person name="Noguchi S."/>
            <person name="Itoh T."/>
            <person name="Shigeta K."/>
            <person name="Senba T."/>
            <person name="Matsumura K."/>
            <person name="Nakajima Y."/>
            <person name="Mizuno T."/>
            <person name="Morinaga M."/>
            <person name="Sasaki M."/>
            <person name="Togashi T."/>
            <person name="Oyama M."/>
            <person name="Hata H."/>
            <person name="Watanabe M."/>
            <person name="Komatsu T."/>
            <person name="Mizushima-Sugano J."/>
            <person name="Satoh T."/>
            <person name="Shirai Y."/>
            <person name="Takahashi Y."/>
            <person name="Nakagawa K."/>
            <person name="Okumura K."/>
            <person name="Nagase T."/>
            <person name="Nomura N."/>
            <person name="Kikuchi H."/>
            <person name="Masuho Y."/>
            <person name="Yamashita R."/>
            <person name="Nakai K."/>
            <person name="Yada T."/>
            <person name="Nakamura Y."/>
            <person name="Ohara O."/>
            <person name="Isogai T."/>
            <person name="Sugano S."/>
        </authorList>
    </citation>
    <scope>NUCLEOTIDE SEQUENCE [LARGE SCALE MRNA] (ISOFORM 2)</scope>
</reference>
<reference key="6">
    <citation type="journal article" date="2006" name="Nature">
        <title>DNA sequence and analysis of human chromosome 8.</title>
        <authorList>
            <person name="Nusbaum C."/>
            <person name="Mikkelsen T.S."/>
            <person name="Zody M.C."/>
            <person name="Asakawa S."/>
            <person name="Taudien S."/>
            <person name="Garber M."/>
            <person name="Kodira C.D."/>
            <person name="Schueler M.G."/>
            <person name="Shimizu A."/>
            <person name="Whittaker C.A."/>
            <person name="Chang J.L."/>
            <person name="Cuomo C.A."/>
            <person name="Dewar K."/>
            <person name="FitzGerald M.G."/>
            <person name="Yang X."/>
            <person name="Allen N.R."/>
            <person name="Anderson S."/>
            <person name="Asakawa T."/>
            <person name="Blechschmidt K."/>
            <person name="Bloom T."/>
            <person name="Borowsky M.L."/>
            <person name="Butler J."/>
            <person name="Cook A."/>
            <person name="Corum B."/>
            <person name="DeArellano K."/>
            <person name="DeCaprio D."/>
            <person name="Dooley K.T."/>
            <person name="Dorris L. III"/>
            <person name="Engels R."/>
            <person name="Gloeckner G."/>
            <person name="Hafez N."/>
            <person name="Hagopian D.S."/>
            <person name="Hall J.L."/>
            <person name="Ishikawa S.K."/>
            <person name="Jaffe D.B."/>
            <person name="Kamat A."/>
            <person name="Kudoh J."/>
            <person name="Lehmann R."/>
            <person name="Lokitsang T."/>
            <person name="Macdonald P."/>
            <person name="Major J.E."/>
            <person name="Matthews C.D."/>
            <person name="Mauceli E."/>
            <person name="Menzel U."/>
            <person name="Mihalev A.H."/>
            <person name="Minoshima S."/>
            <person name="Murayama Y."/>
            <person name="Naylor J.W."/>
            <person name="Nicol R."/>
            <person name="Nguyen C."/>
            <person name="O'Leary S.B."/>
            <person name="O'Neill K."/>
            <person name="Parker S.C.J."/>
            <person name="Polley A."/>
            <person name="Raymond C.K."/>
            <person name="Reichwald K."/>
            <person name="Rodriguez J."/>
            <person name="Sasaki T."/>
            <person name="Schilhabel M."/>
            <person name="Siddiqui R."/>
            <person name="Smith C.L."/>
            <person name="Sneddon T.P."/>
            <person name="Talamas J.A."/>
            <person name="Tenzin P."/>
            <person name="Topham K."/>
            <person name="Venkataraman V."/>
            <person name="Wen G."/>
            <person name="Yamazaki S."/>
            <person name="Young S.K."/>
            <person name="Zeng Q."/>
            <person name="Zimmer A.R."/>
            <person name="Rosenthal A."/>
            <person name="Birren B.W."/>
            <person name="Platzer M."/>
            <person name="Shimizu N."/>
            <person name="Lander E.S."/>
        </authorList>
    </citation>
    <scope>NUCLEOTIDE SEQUENCE [LARGE SCALE GENOMIC DNA]</scope>
</reference>
<reference key="7">
    <citation type="journal article" date="2004" name="Genome Res.">
        <title>The status, quality, and expansion of the NIH full-length cDNA project: the Mammalian Gene Collection (MGC).</title>
        <authorList>
            <consortium name="The MGC Project Team"/>
        </authorList>
    </citation>
    <scope>NUCLEOTIDE SEQUENCE [LARGE SCALE MRNA] (ISOFORM 1)</scope>
    <source>
        <tissue>Placenta</tissue>
    </source>
</reference>
<reference key="8">
    <citation type="journal article" date="1994" name="J. Biol. Chem.">
        <title>Human kappa opiate receptor second extracellular loop elevates dynorphin's affinity for human mu/kappa chimeras.</title>
        <authorList>
            <person name="Wang J.B."/>
            <person name="Johnson P.S."/>
            <person name="Wu J.M."/>
            <person name="Wang W.F."/>
            <person name="Uhl G.R."/>
        </authorList>
    </citation>
    <scope>NUCLEOTIDE SEQUENCE [MRNA] OF 136-279 (ISOFORMS 1/2)</scope>
    <source>
        <tissue>Brain</tissue>
    </source>
</reference>
<reference key="9">
    <citation type="submission" date="1994-12" db="EMBL/GenBank/DDBJ databases">
        <title>Mapping of the human kappa opioid receptor gene to chromosome 8q11.2-q12: no evidence for multiple kappa opioid receptor genes.</title>
        <authorList>
            <person name="Grandy D.K."/>
        </authorList>
    </citation>
    <scope>NUCLEOTIDE SEQUENCE [GENOMIC DNA] OF 132-203 (ISOFORMS 1/2)</scope>
</reference>
<reference key="10">
    <citation type="journal article" date="2002" name="J. Biol. Chem.">
        <title>Ezrin-radixin-moesin-binding phosphoprotein-50/Na+/H+ exchanger regulatory factor (EBP50/NHERF) blocks U50,488H-induced down-regulation of the human kappa opioid receptor by enhancing its recycling rate.</title>
        <authorList>
            <person name="Li J.-G."/>
            <person name="Chen C."/>
            <person name="Liu-Chen L.-Y."/>
        </authorList>
    </citation>
    <scope>INTERACTION WITH NHERF1</scope>
    <scope>FUNCTION</scope>
    <scope>SUBCELLULAR LOCATION</scope>
</reference>
<reference key="11">
    <citation type="journal article" date="2006" name="J. Biol. Chem.">
        <title>GEC1 interacts with the kappa opioid receptor and enhances expression of the receptor.</title>
        <authorList>
            <person name="Chen C."/>
            <person name="Li J.-G."/>
            <person name="Chen Y."/>
            <person name="Huang P."/>
            <person name="Wang Y."/>
            <person name="Liu-Chen L.-Y."/>
        </authorList>
    </citation>
    <scope>INTERACTION WITH GABARAPL1</scope>
</reference>
<reference key="12">
    <citation type="journal article" date="2007" name="Biochemistry">
        <title>N-glycosylation of the human kappa opioid receptor enhances its stability but slows its trafficking along the biosynthesis pathway.</title>
        <authorList>
            <person name="Li J.G."/>
            <person name="Chen C."/>
            <person name="Liu-Chen L.Y."/>
        </authorList>
    </citation>
    <scope>GLYCOSYLATION AT ASN-25 AND ASN-39</scope>
</reference>
<reference key="13">
    <citation type="journal article" date="2010" name="Acta Pharmacol. Sin.">
        <title>The role of kappa-opioid receptor activation in mediating antinociception and addiction.</title>
        <authorList>
            <person name="Wang Y.H."/>
            <person name="Sun J.F."/>
            <person name="Tao Y.M."/>
            <person name="Chi Z.Q."/>
            <person name="Liu J.G."/>
        </authorList>
    </citation>
    <scope>REVIEW</scope>
</reference>
<reference key="14">
    <citation type="journal article" date="2010" name="Psychopharmacology">
        <title>Kinase cascades and ligand-directed signaling at the kappa opioid receptor.</title>
        <authorList>
            <person name="Bruchas M.R."/>
            <person name="Chavkin C."/>
        </authorList>
    </citation>
    <scope>REVIEW</scope>
</reference>
<reference key="15">
    <citation type="journal article" date="2012" name="Nature">
        <title>Structure of the human kappa-opioid receptor in complex with JDTic.</title>
        <authorList>
            <person name="Wu H."/>
            <person name="Wacker D."/>
            <person name="Mileni M."/>
            <person name="Katritch V."/>
            <person name="Han G.W."/>
            <person name="Vardy E."/>
            <person name="Liu W."/>
            <person name="Thompson A.A."/>
            <person name="Huang X.P."/>
            <person name="Carroll F.I."/>
            <person name="Mascarella S.W."/>
            <person name="Westkaemper R.B."/>
            <person name="Mosier P.D."/>
            <person name="Roth B.L."/>
            <person name="Cherezov V."/>
            <person name="Stevens R.C."/>
        </authorList>
    </citation>
    <scope>X-RAY CRYSTALLOGRAPHY (2.9 ANGSTROMS) OF 43-358 IN COMPLEX WITH ANTAGONIST</scope>
    <scope>FUNCTION</scope>
    <scope>SUBCELLULAR LOCATION</scope>
    <scope>DISULFIDE BOND</scope>
</reference>
<organism>
    <name type="scientific">Homo sapiens</name>
    <name type="common">Human</name>
    <dbReference type="NCBI Taxonomy" id="9606"/>
    <lineage>
        <taxon>Eukaryota</taxon>
        <taxon>Metazoa</taxon>
        <taxon>Chordata</taxon>
        <taxon>Craniata</taxon>
        <taxon>Vertebrata</taxon>
        <taxon>Euteleostomi</taxon>
        <taxon>Mammalia</taxon>
        <taxon>Eutheria</taxon>
        <taxon>Euarchontoglires</taxon>
        <taxon>Primates</taxon>
        <taxon>Haplorrhini</taxon>
        <taxon>Catarrhini</taxon>
        <taxon>Hominidae</taxon>
        <taxon>Homo</taxon>
    </lineage>
</organism>
<evidence type="ECO:0000255" key="1"/>
<evidence type="ECO:0000255" key="2">
    <source>
        <dbReference type="PROSITE-ProRule" id="PRU00521"/>
    </source>
</evidence>
<evidence type="ECO:0000269" key="3">
    <source>
    </source>
</evidence>
<evidence type="ECO:0000269" key="4">
    <source>
    </source>
</evidence>
<evidence type="ECO:0000269" key="5">
    <source>
    </source>
</evidence>
<evidence type="ECO:0000269" key="6">
    <source>
    </source>
</evidence>
<evidence type="ECO:0000269" key="7">
    <source>
    </source>
</evidence>
<evidence type="ECO:0000269" key="8">
    <source>
    </source>
</evidence>
<evidence type="ECO:0000303" key="9">
    <source>
    </source>
</evidence>
<evidence type="ECO:0000305" key="10"/>
<evidence type="ECO:0007829" key="11">
    <source>
        <dbReference type="PDB" id="4DJH"/>
    </source>
</evidence>
<evidence type="ECO:0007829" key="12">
    <source>
        <dbReference type="PDB" id="7T10"/>
    </source>
</evidence>
<evidence type="ECO:0007829" key="13">
    <source>
        <dbReference type="PDB" id="7UL2"/>
    </source>
</evidence>
<evidence type="ECO:0007829" key="14">
    <source>
        <dbReference type="PDB" id="7Y1F"/>
    </source>
</evidence>
<evidence type="ECO:0007829" key="15">
    <source>
        <dbReference type="PDB" id="8DZP"/>
    </source>
</evidence>
<evidence type="ECO:0007829" key="16">
    <source>
        <dbReference type="PDB" id="8DZQ"/>
    </source>
</evidence>
<evidence type="ECO:0007829" key="17">
    <source>
        <dbReference type="PDB" id="8DZS"/>
    </source>
</evidence>
<evidence type="ECO:0007829" key="18">
    <source>
        <dbReference type="PDB" id="8FEG"/>
    </source>
</evidence>